<keyword id="KW-0010">Activator</keyword>
<keyword id="KW-0963">Cytoplasm</keyword>
<keyword id="KW-0238">DNA-binding</keyword>
<keyword id="KW-1185">Reference proteome</keyword>
<keyword id="KW-0346">Stress response</keyword>
<keyword id="KW-0804">Transcription</keyword>
<keyword id="KW-0805">Transcription regulation</keyword>
<proteinExistence type="inferred from homology"/>
<comment type="function">
    <text evidence="1">Binds to and stimulates the transcription of the CCAAT-containing, cold-shock-inducible promoters of the H-NS and GyrA proteins. Also binds to the inverted repeat 5'-ATTGG-3' (By similarity).</text>
</comment>
<comment type="subcellular location">
    <subcellularLocation>
        <location evidence="1">Cytoplasm</location>
    </subcellularLocation>
</comment>
<comment type="induction">
    <text evidence="1">In response to low temperature.</text>
</comment>
<gene>
    <name type="primary">cspA</name>
    <name type="ordered locus">c4377</name>
</gene>
<evidence type="ECO:0000250" key="1"/>
<name>CSPA_ECOL6</name>
<organism>
    <name type="scientific">Escherichia coli O6:H1 (strain CFT073 / ATCC 700928 / UPEC)</name>
    <dbReference type="NCBI Taxonomy" id="199310"/>
    <lineage>
        <taxon>Bacteria</taxon>
        <taxon>Pseudomonadati</taxon>
        <taxon>Pseudomonadota</taxon>
        <taxon>Gammaproteobacteria</taxon>
        <taxon>Enterobacterales</taxon>
        <taxon>Enterobacteriaceae</taxon>
        <taxon>Escherichia</taxon>
    </lineage>
</organism>
<dbReference type="EMBL" id="AE014075">
    <property type="protein sequence ID" value="AAN82813.1"/>
    <property type="molecule type" value="Genomic_DNA"/>
</dbReference>
<dbReference type="RefSeq" id="WP_000014594.1">
    <property type="nucleotide sequence ID" value="NZ_CP051263.1"/>
</dbReference>
<dbReference type="BMRB" id="P0A9Y0"/>
<dbReference type="SMR" id="P0A9Y0"/>
<dbReference type="STRING" id="199310.c4377"/>
<dbReference type="GeneID" id="93778287"/>
<dbReference type="KEGG" id="ecc:c4377"/>
<dbReference type="eggNOG" id="COG1278">
    <property type="taxonomic scope" value="Bacteria"/>
</dbReference>
<dbReference type="HOGENOM" id="CLU_117621_2_1_6"/>
<dbReference type="BioCyc" id="ECOL199310:C4377-MONOMER"/>
<dbReference type="Proteomes" id="UP000001410">
    <property type="component" value="Chromosome"/>
</dbReference>
<dbReference type="GO" id="GO:0005829">
    <property type="term" value="C:cytosol"/>
    <property type="evidence" value="ECO:0007669"/>
    <property type="project" value="UniProtKB-ARBA"/>
</dbReference>
<dbReference type="GO" id="GO:0003677">
    <property type="term" value="F:DNA binding"/>
    <property type="evidence" value="ECO:0007669"/>
    <property type="project" value="UniProtKB-KW"/>
</dbReference>
<dbReference type="CDD" id="cd04458">
    <property type="entry name" value="CSP_CDS"/>
    <property type="match status" value="1"/>
</dbReference>
<dbReference type="FunFam" id="2.40.50.140:FF:000006">
    <property type="entry name" value="Cold shock protein CspC"/>
    <property type="match status" value="1"/>
</dbReference>
<dbReference type="Gene3D" id="2.40.50.140">
    <property type="entry name" value="Nucleic acid-binding proteins"/>
    <property type="match status" value="1"/>
</dbReference>
<dbReference type="InterPro" id="IPR012156">
    <property type="entry name" value="Cold_shock_CspA"/>
</dbReference>
<dbReference type="InterPro" id="IPR050181">
    <property type="entry name" value="Cold_shock_domain"/>
</dbReference>
<dbReference type="InterPro" id="IPR011129">
    <property type="entry name" value="CSD"/>
</dbReference>
<dbReference type="InterPro" id="IPR019844">
    <property type="entry name" value="CSD_CS"/>
</dbReference>
<dbReference type="InterPro" id="IPR002059">
    <property type="entry name" value="CSP_DNA-bd"/>
</dbReference>
<dbReference type="InterPro" id="IPR012340">
    <property type="entry name" value="NA-bd_OB-fold"/>
</dbReference>
<dbReference type="NCBIfam" id="NF007679">
    <property type="entry name" value="PRK10354.1"/>
    <property type="match status" value="1"/>
</dbReference>
<dbReference type="PANTHER" id="PTHR11544">
    <property type="entry name" value="COLD SHOCK DOMAIN CONTAINING PROTEINS"/>
    <property type="match status" value="1"/>
</dbReference>
<dbReference type="Pfam" id="PF00313">
    <property type="entry name" value="CSD"/>
    <property type="match status" value="1"/>
</dbReference>
<dbReference type="PIRSF" id="PIRSF002599">
    <property type="entry name" value="Cold_shock_A"/>
    <property type="match status" value="1"/>
</dbReference>
<dbReference type="PRINTS" id="PR00050">
    <property type="entry name" value="COLDSHOCK"/>
</dbReference>
<dbReference type="SMART" id="SM00357">
    <property type="entry name" value="CSP"/>
    <property type="match status" value="1"/>
</dbReference>
<dbReference type="SUPFAM" id="SSF50249">
    <property type="entry name" value="Nucleic acid-binding proteins"/>
    <property type="match status" value="1"/>
</dbReference>
<dbReference type="PROSITE" id="PS00352">
    <property type="entry name" value="CSD_1"/>
    <property type="match status" value="1"/>
</dbReference>
<dbReference type="PROSITE" id="PS51857">
    <property type="entry name" value="CSD_2"/>
    <property type="match status" value="1"/>
</dbReference>
<feature type="initiator methionine" description="Removed" evidence="1">
    <location>
        <position position="1"/>
    </location>
</feature>
<feature type="chain" id="PRO_0000100234" description="Cold shock protein CspA">
    <location>
        <begin position="2"/>
        <end position="70"/>
    </location>
</feature>
<feature type="domain" description="CSD">
    <location>
        <begin position="7"/>
        <end position="67"/>
    </location>
</feature>
<reference key="1">
    <citation type="journal article" date="2002" name="Proc. Natl. Acad. Sci. U.S.A.">
        <title>Extensive mosaic structure revealed by the complete genome sequence of uropathogenic Escherichia coli.</title>
        <authorList>
            <person name="Welch R.A."/>
            <person name="Burland V."/>
            <person name="Plunkett G. III"/>
            <person name="Redford P."/>
            <person name="Roesch P."/>
            <person name="Rasko D."/>
            <person name="Buckles E.L."/>
            <person name="Liou S.-R."/>
            <person name="Boutin A."/>
            <person name="Hackett J."/>
            <person name="Stroud D."/>
            <person name="Mayhew G.F."/>
            <person name="Rose D.J."/>
            <person name="Zhou S."/>
            <person name="Schwartz D.C."/>
            <person name="Perna N.T."/>
            <person name="Mobley H.L.T."/>
            <person name="Donnenberg M.S."/>
            <person name="Blattner F.R."/>
        </authorList>
    </citation>
    <scope>NUCLEOTIDE SEQUENCE [LARGE SCALE GENOMIC DNA]</scope>
    <source>
        <strain>CFT073 / ATCC 700928 / UPEC</strain>
    </source>
</reference>
<protein>
    <recommendedName>
        <fullName>Cold shock protein CspA</fullName>
        <shortName>CSP-A</shortName>
    </recommendedName>
    <alternativeName>
        <fullName>7.4 kDa cold shock protein</fullName>
    </alternativeName>
    <alternativeName>
        <fullName>CS7.4</fullName>
    </alternativeName>
</protein>
<sequence>MSGKMTGIVKWFNADKGFGFITPDDGSKDVFVHFSAIQNDGYKSLDEGQKVSFTIESGAKGPAAGNVTSL</sequence>
<accession>P0A9Y0</accession>
<accession>P15277</accession>
<accession>P37410</accession>
<accession>Q54170</accession>